<reference key="1">
    <citation type="journal article" date="2003" name="Proc. Natl. Acad. Sci. U.S.A.">
        <title>Complete genome sequence of the marine planctomycete Pirellula sp. strain 1.</title>
        <authorList>
            <person name="Gloeckner F.O."/>
            <person name="Kube M."/>
            <person name="Bauer M."/>
            <person name="Teeling H."/>
            <person name="Lombardot T."/>
            <person name="Ludwig W."/>
            <person name="Gade D."/>
            <person name="Beck A."/>
            <person name="Borzym K."/>
            <person name="Heitmann K."/>
            <person name="Rabus R."/>
            <person name="Schlesner H."/>
            <person name="Amann R."/>
            <person name="Reinhardt R."/>
        </authorList>
    </citation>
    <scope>NUCLEOTIDE SEQUENCE [LARGE SCALE GENOMIC DNA]</scope>
    <source>
        <strain>DSM 10527 / NCIMB 13988 / SH1</strain>
    </source>
</reference>
<feature type="chain" id="PRO_0000124328" description="Small ribosomal subunit protein uS7">
    <location>
        <begin position="1"/>
        <end position="157"/>
    </location>
</feature>
<proteinExistence type="inferred from homology"/>
<accession>Q7UN31</accession>
<dbReference type="EMBL" id="BX294146">
    <property type="protein sequence ID" value="CAD75588.1"/>
    <property type="molecule type" value="Genomic_DNA"/>
</dbReference>
<dbReference type="RefSeq" id="NP_868041.1">
    <property type="nucleotide sequence ID" value="NC_005027.1"/>
</dbReference>
<dbReference type="RefSeq" id="WP_007326864.1">
    <property type="nucleotide sequence ID" value="NC_005027.1"/>
</dbReference>
<dbReference type="SMR" id="Q7UN31"/>
<dbReference type="FunCoup" id="Q7UN31">
    <property type="interactions" value="608"/>
</dbReference>
<dbReference type="STRING" id="243090.RB7820"/>
<dbReference type="EnsemblBacteria" id="CAD75588">
    <property type="protein sequence ID" value="CAD75588"/>
    <property type="gene ID" value="RB7820"/>
</dbReference>
<dbReference type="GeneID" id="90608432"/>
<dbReference type="KEGG" id="rba:RB7820"/>
<dbReference type="PATRIC" id="fig|243090.15.peg.3775"/>
<dbReference type="eggNOG" id="COG0049">
    <property type="taxonomic scope" value="Bacteria"/>
</dbReference>
<dbReference type="HOGENOM" id="CLU_072226_1_1_0"/>
<dbReference type="InParanoid" id="Q7UN31"/>
<dbReference type="OrthoDB" id="9807653at2"/>
<dbReference type="Proteomes" id="UP000001025">
    <property type="component" value="Chromosome"/>
</dbReference>
<dbReference type="GO" id="GO:0022627">
    <property type="term" value="C:cytosolic small ribosomal subunit"/>
    <property type="evidence" value="ECO:0000318"/>
    <property type="project" value="GO_Central"/>
</dbReference>
<dbReference type="GO" id="GO:0005840">
    <property type="term" value="C:ribosome"/>
    <property type="evidence" value="ECO:0000318"/>
    <property type="project" value="GO_Central"/>
</dbReference>
<dbReference type="GO" id="GO:0003729">
    <property type="term" value="F:mRNA binding"/>
    <property type="evidence" value="ECO:0000318"/>
    <property type="project" value="GO_Central"/>
</dbReference>
<dbReference type="GO" id="GO:0019843">
    <property type="term" value="F:rRNA binding"/>
    <property type="evidence" value="ECO:0000318"/>
    <property type="project" value="GO_Central"/>
</dbReference>
<dbReference type="GO" id="GO:0003735">
    <property type="term" value="F:structural constituent of ribosome"/>
    <property type="evidence" value="ECO:0000318"/>
    <property type="project" value="GO_Central"/>
</dbReference>
<dbReference type="GO" id="GO:0000049">
    <property type="term" value="F:tRNA binding"/>
    <property type="evidence" value="ECO:0007669"/>
    <property type="project" value="UniProtKB-UniRule"/>
</dbReference>
<dbReference type="GO" id="GO:0000028">
    <property type="term" value="P:ribosomal small subunit assembly"/>
    <property type="evidence" value="ECO:0000318"/>
    <property type="project" value="GO_Central"/>
</dbReference>
<dbReference type="GO" id="GO:0006412">
    <property type="term" value="P:translation"/>
    <property type="evidence" value="ECO:0000318"/>
    <property type="project" value="GO_Central"/>
</dbReference>
<dbReference type="CDD" id="cd14869">
    <property type="entry name" value="uS7_Bacteria"/>
    <property type="match status" value="1"/>
</dbReference>
<dbReference type="FunFam" id="1.10.455.10:FF:000001">
    <property type="entry name" value="30S ribosomal protein S7"/>
    <property type="match status" value="1"/>
</dbReference>
<dbReference type="Gene3D" id="1.10.455.10">
    <property type="entry name" value="Ribosomal protein S7 domain"/>
    <property type="match status" value="1"/>
</dbReference>
<dbReference type="HAMAP" id="MF_00480_B">
    <property type="entry name" value="Ribosomal_uS7_B"/>
    <property type="match status" value="1"/>
</dbReference>
<dbReference type="InterPro" id="IPR000235">
    <property type="entry name" value="Ribosomal_uS7"/>
</dbReference>
<dbReference type="InterPro" id="IPR005717">
    <property type="entry name" value="Ribosomal_uS7_bac/org-type"/>
</dbReference>
<dbReference type="InterPro" id="IPR020606">
    <property type="entry name" value="Ribosomal_uS7_CS"/>
</dbReference>
<dbReference type="InterPro" id="IPR023798">
    <property type="entry name" value="Ribosomal_uS7_dom"/>
</dbReference>
<dbReference type="InterPro" id="IPR036823">
    <property type="entry name" value="Ribosomal_uS7_dom_sf"/>
</dbReference>
<dbReference type="NCBIfam" id="TIGR01029">
    <property type="entry name" value="rpsG_bact"/>
    <property type="match status" value="1"/>
</dbReference>
<dbReference type="PANTHER" id="PTHR11205">
    <property type="entry name" value="RIBOSOMAL PROTEIN S7"/>
    <property type="match status" value="1"/>
</dbReference>
<dbReference type="Pfam" id="PF00177">
    <property type="entry name" value="Ribosomal_S7"/>
    <property type="match status" value="1"/>
</dbReference>
<dbReference type="PIRSF" id="PIRSF002122">
    <property type="entry name" value="RPS7p_RPS7a_RPS5e_RPS7o"/>
    <property type="match status" value="1"/>
</dbReference>
<dbReference type="SUPFAM" id="SSF47973">
    <property type="entry name" value="Ribosomal protein S7"/>
    <property type="match status" value="1"/>
</dbReference>
<dbReference type="PROSITE" id="PS00052">
    <property type="entry name" value="RIBOSOMAL_S7"/>
    <property type="match status" value="1"/>
</dbReference>
<protein>
    <recommendedName>
        <fullName evidence="1">Small ribosomal subunit protein uS7</fullName>
    </recommendedName>
    <alternativeName>
        <fullName evidence="2">30S ribosomal protein S7</fullName>
    </alternativeName>
</protein>
<keyword id="KW-1185">Reference proteome</keyword>
<keyword id="KW-0687">Ribonucleoprotein</keyword>
<keyword id="KW-0689">Ribosomal protein</keyword>
<keyword id="KW-0694">RNA-binding</keyword>
<keyword id="KW-0699">rRNA-binding</keyword>
<keyword id="KW-0820">tRNA-binding</keyword>
<organism>
    <name type="scientific">Rhodopirellula baltica (strain DSM 10527 / NCIMB 13988 / SH1)</name>
    <dbReference type="NCBI Taxonomy" id="243090"/>
    <lineage>
        <taxon>Bacteria</taxon>
        <taxon>Pseudomonadati</taxon>
        <taxon>Planctomycetota</taxon>
        <taxon>Planctomycetia</taxon>
        <taxon>Pirellulales</taxon>
        <taxon>Pirellulaceae</taxon>
        <taxon>Rhodopirellula</taxon>
    </lineage>
</organism>
<comment type="function">
    <text evidence="1">One of the primary rRNA binding proteins, it binds directly to 16S rRNA where it nucleates assembly of the head domain of the 30S subunit. Is located at the subunit interface close to the decoding center, probably blocks exit of the E-site tRNA.</text>
</comment>
<comment type="subunit">
    <text evidence="1">Part of the 30S ribosomal subunit. Contacts proteins S9 and S11.</text>
</comment>
<comment type="similarity">
    <text evidence="1">Belongs to the universal ribosomal protein uS7 family.</text>
</comment>
<sequence>MGRITSSRSQLIGDPRHHSLLASKFINCLMLDGKKTTAQRVFYDALEEIGKRHEGEETPIEVFEAALENIKPYIEVRSKRVGGASYQVPMQVNKARQQSLAIRWILAAVRDKKGRPMALKLADELLAGFKKEGAAYTKRENTHRMADANKAFAHFAW</sequence>
<gene>
    <name evidence="1" type="primary">rpsG</name>
    <name type="ordered locus">RB7820</name>
</gene>
<name>RS7_RHOBA</name>
<evidence type="ECO:0000255" key="1">
    <source>
        <dbReference type="HAMAP-Rule" id="MF_00480"/>
    </source>
</evidence>
<evidence type="ECO:0000305" key="2"/>